<evidence type="ECO:0000255" key="1">
    <source>
        <dbReference type="HAMAP-Rule" id="MF_00416"/>
    </source>
</evidence>
<feature type="signal peptide" evidence="1">
    <location>
        <begin position="1"/>
        <end position="19"/>
    </location>
</feature>
<feature type="chain" id="PRO_1000123981" description="Flagellar P-ring protein">
    <location>
        <begin position="20"/>
        <end position="365"/>
    </location>
</feature>
<protein>
    <recommendedName>
        <fullName evidence="1">Flagellar P-ring protein</fullName>
    </recommendedName>
    <alternativeName>
        <fullName evidence="1">Basal body P-ring protein</fullName>
    </alternativeName>
</protein>
<name>FLGI_SALNS</name>
<comment type="function">
    <text evidence="1">Assembles around the rod to form the L-ring and probably protects the motor/basal body from shearing forces during rotation.</text>
</comment>
<comment type="subunit">
    <text evidence="1">The basal body constitutes a major portion of the flagellar organelle and consists of four rings (L,P,S, and M) mounted on a central rod.</text>
</comment>
<comment type="subcellular location">
    <subcellularLocation>
        <location evidence="1">Periplasm</location>
    </subcellularLocation>
    <subcellularLocation>
        <location evidence="1">Bacterial flagellum basal body</location>
    </subcellularLocation>
</comment>
<comment type="similarity">
    <text evidence="1">Belongs to the FlgI family.</text>
</comment>
<proteinExistence type="inferred from homology"/>
<reference key="1">
    <citation type="journal article" date="2011" name="J. Bacteriol.">
        <title>Comparative genomics of 28 Salmonella enterica isolates: evidence for CRISPR-mediated adaptive sublineage evolution.</title>
        <authorList>
            <person name="Fricke W.F."/>
            <person name="Mammel M.K."/>
            <person name="McDermott P.F."/>
            <person name="Tartera C."/>
            <person name="White D.G."/>
            <person name="Leclerc J.E."/>
            <person name="Ravel J."/>
            <person name="Cebula T.A."/>
        </authorList>
    </citation>
    <scope>NUCLEOTIDE SEQUENCE [LARGE SCALE GENOMIC DNA]</scope>
    <source>
        <strain>SL254</strain>
    </source>
</reference>
<keyword id="KW-0975">Bacterial flagellum</keyword>
<keyword id="KW-0574">Periplasm</keyword>
<keyword id="KW-0732">Signal</keyword>
<accession>B4T313</accession>
<gene>
    <name evidence="1" type="primary">flgI</name>
    <name type="ordered locus">SNSL254_A1278</name>
</gene>
<dbReference type="EMBL" id="CP001113">
    <property type="protein sequence ID" value="ACF63530.1"/>
    <property type="molecule type" value="Genomic_DNA"/>
</dbReference>
<dbReference type="RefSeq" id="WP_001518955.1">
    <property type="nucleotide sequence ID" value="NZ_CCMR01000003.1"/>
</dbReference>
<dbReference type="SMR" id="B4T313"/>
<dbReference type="KEGG" id="see:SNSL254_A1278"/>
<dbReference type="HOGENOM" id="CLU_045235_1_0_6"/>
<dbReference type="Proteomes" id="UP000008824">
    <property type="component" value="Chromosome"/>
</dbReference>
<dbReference type="GO" id="GO:0009428">
    <property type="term" value="C:bacterial-type flagellum basal body, distal rod, P ring"/>
    <property type="evidence" value="ECO:0007669"/>
    <property type="project" value="InterPro"/>
</dbReference>
<dbReference type="GO" id="GO:0030288">
    <property type="term" value="C:outer membrane-bounded periplasmic space"/>
    <property type="evidence" value="ECO:0007669"/>
    <property type="project" value="InterPro"/>
</dbReference>
<dbReference type="GO" id="GO:0005198">
    <property type="term" value="F:structural molecule activity"/>
    <property type="evidence" value="ECO:0007669"/>
    <property type="project" value="InterPro"/>
</dbReference>
<dbReference type="GO" id="GO:0071973">
    <property type="term" value="P:bacterial-type flagellum-dependent cell motility"/>
    <property type="evidence" value="ECO:0007669"/>
    <property type="project" value="InterPro"/>
</dbReference>
<dbReference type="HAMAP" id="MF_00416">
    <property type="entry name" value="FlgI"/>
    <property type="match status" value="1"/>
</dbReference>
<dbReference type="InterPro" id="IPR001782">
    <property type="entry name" value="Flag_FlgI"/>
</dbReference>
<dbReference type="NCBIfam" id="NF003676">
    <property type="entry name" value="PRK05303.1"/>
    <property type="match status" value="1"/>
</dbReference>
<dbReference type="PANTHER" id="PTHR30381">
    <property type="entry name" value="FLAGELLAR P-RING PERIPLASMIC PROTEIN FLGI"/>
    <property type="match status" value="1"/>
</dbReference>
<dbReference type="PANTHER" id="PTHR30381:SF0">
    <property type="entry name" value="FLAGELLAR P-RING PROTEIN"/>
    <property type="match status" value="1"/>
</dbReference>
<dbReference type="Pfam" id="PF02119">
    <property type="entry name" value="FlgI"/>
    <property type="match status" value="1"/>
</dbReference>
<dbReference type="PRINTS" id="PR01010">
    <property type="entry name" value="FLGPRINGFLGI"/>
</dbReference>
<sequence length="365" mass="38168">MFKALAGIVLALVATLAHAERIRDLTSVQGVRENSLIGYGLVVGLDGTGDQTTQTPFTTQTLNNMLSQLGITVPTGTNMQLKNVAAVMVTASYPPFARQGQTIDVVVSSMGNAKSLRGGTLLMTPLKGVDSQVYALAQGNILVGGAGASAGGSSVQVNQLNGGRITNGAIIERELPTQFGAGNTINLQLNDEDFTMAQQITDAINRARGYGSATALDARTVQVRVPSGNSSQVRFLADIQNMEVNVTPQDAKVVINSRTGSVVMNREVTLDSCAVAQGNLSVTVNRQLNVNQPNTPFGGGQTVVTPQTQIDLRQSGGSLQSVRSSANLNSVVRALNALGATPMDLMSILQSMQSAGCLRAKLEII</sequence>
<organism>
    <name type="scientific">Salmonella newport (strain SL254)</name>
    <dbReference type="NCBI Taxonomy" id="423368"/>
    <lineage>
        <taxon>Bacteria</taxon>
        <taxon>Pseudomonadati</taxon>
        <taxon>Pseudomonadota</taxon>
        <taxon>Gammaproteobacteria</taxon>
        <taxon>Enterobacterales</taxon>
        <taxon>Enterobacteriaceae</taxon>
        <taxon>Salmonella</taxon>
    </lineage>
</organism>